<sequence length="62" mass="6884">MAKVCYFTGRKTVSGNNRSHAMNQTKRAVKPNLQKVTVLIDGKPKKVWASARALKSGKVERV</sequence>
<protein>
    <recommendedName>
        <fullName evidence="1">Large ribosomal subunit protein bL28</fullName>
    </recommendedName>
    <alternativeName>
        <fullName evidence="2">50S ribosomal protein L28</fullName>
    </alternativeName>
</protein>
<comment type="similarity">
    <text evidence="1">Belongs to the bacterial ribosomal protein bL28 family.</text>
</comment>
<gene>
    <name evidence="1" type="primary">rpmB</name>
    <name type="ordered locus">SSU98_0331</name>
</gene>
<dbReference type="EMBL" id="CP000408">
    <property type="protein sequence ID" value="ABP91489.1"/>
    <property type="molecule type" value="Genomic_DNA"/>
</dbReference>
<dbReference type="SMR" id="A4VZF0"/>
<dbReference type="KEGG" id="ssv:SSU98_0331"/>
<dbReference type="HOGENOM" id="CLU_064548_7_1_9"/>
<dbReference type="GO" id="GO:1990904">
    <property type="term" value="C:ribonucleoprotein complex"/>
    <property type="evidence" value="ECO:0007669"/>
    <property type="project" value="UniProtKB-KW"/>
</dbReference>
<dbReference type="GO" id="GO:0005840">
    <property type="term" value="C:ribosome"/>
    <property type="evidence" value="ECO:0007669"/>
    <property type="project" value="UniProtKB-KW"/>
</dbReference>
<dbReference type="GO" id="GO:0003735">
    <property type="term" value="F:structural constituent of ribosome"/>
    <property type="evidence" value="ECO:0007669"/>
    <property type="project" value="InterPro"/>
</dbReference>
<dbReference type="GO" id="GO:0006412">
    <property type="term" value="P:translation"/>
    <property type="evidence" value="ECO:0007669"/>
    <property type="project" value="UniProtKB-UniRule"/>
</dbReference>
<dbReference type="Gene3D" id="2.30.170.40">
    <property type="entry name" value="Ribosomal protein L28/L24"/>
    <property type="match status" value="1"/>
</dbReference>
<dbReference type="HAMAP" id="MF_00373">
    <property type="entry name" value="Ribosomal_bL28"/>
    <property type="match status" value="1"/>
</dbReference>
<dbReference type="InterPro" id="IPR050096">
    <property type="entry name" value="Bacterial_rp_bL28"/>
</dbReference>
<dbReference type="InterPro" id="IPR026569">
    <property type="entry name" value="Ribosomal_bL28"/>
</dbReference>
<dbReference type="InterPro" id="IPR034704">
    <property type="entry name" value="Ribosomal_bL28/bL31-like_sf"/>
</dbReference>
<dbReference type="InterPro" id="IPR001383">
    <property type="entry name" value="Ribosomal_bL28_bact-type"/>
</dbReference>
<dbReference type="InterPro" id="IPR037147">
    <property type="entry name" value="Ribosomal_bL28_sf"/>
</dbReference>
<dbReference type="NCBIfam" id="TIGR00009">
    <property type="entry name" value="L28"/>
    <property type="match status" value="1"/>
</dbReference>
<dbReference type="PANTHER" id="PTHR39080">
    <property type="entry name" value="50S RIBOSOMAL PROTEIN L28"/>
    <property type="match status" value="1"/>
</dbReference>
<dbReference type="PANTHER" id="PTHR39080:SF1">
    <property type="entry name" value="LARGE RIBOSOMAL SUBUNIT PROTEIN BL28A"/>
    <property type="match status" value="1"/>
</dbReference>
<dbReference type="Pfam" id="PF00830">
    <property type="entry name" value="Ribosomal_L28"/>
    <property type="match status" value="1"/>
</dbReference>
<dbReference type="SUPFAM" id="SSF143800">
    <property type="entry name" value="L28p-like"/>
    <property type="match status" value="1"/>
</dbReference>
<keyword id="KW-0687">Ribonucleoprotein</keyword>
<keyword id="KW-0689">Ribosomal protein</keyword>
<name>RL28_STRS2</name>
<reference key="1">
    <citation type="journal article" date="2007" name="PLoS ONE">
        <title>A glimpse of streptococcal toxic shock syndrome from comparative genomics of S. suis 2 Chinese isolates.</title>
        <authorList>
            <person name="Chen C."/>
            <person name="Tang J."/>
            <person name="Dong W."/>
            <person name="Wang C."/>
            <person name="Feng Y."/>
            <person name="Wang J."/>
            <person name="Zheng F."/>
            <person name="Pan X."/>
            <person name="Liu D."/>
            <person name="Li M."/>
            <person name="Song Y."/>
            <person name="Zhu X."/>
            <person name="Sun H."/>
            <person name="Feng T."/>
            <person name="Guo Z."/>
            <person name="Ju A."/>
            <person name="Ge J."/>
            <person name="Dong Y."/>
            <person name="Sun W."/>
            <person name="Jiang Y."/>
            <person name="Wang J."/>
            <person name="Yan J."/>
            <person name="Yang H."/>
            <person name="Wang X."/>
            <person name="Gao G.F."/>
            <person name="Yang R."/>
            <person name="Wang J."/>
            <person name="Yu J."/>
        </authorList>
    </citation>
    <scope>NUCLEOTIDE SEQUENCE [LARGE SCALE GENOMIC DNA]</scope>
    <source>
        <strain>98HAH33</strain>
    </source>
</reference>
<organism>
    <name type="scientific">Streptococcus suis (strain 98HAH33)</name>
    <dbReference type="NCBI Taxonomy" id="391296"/>
    <lineage>
        <taxon>Bacteria</taxon>
        <taxon>Bacillati</taxon>
        <taxon>Bacillota</taxon>
        <taxon>Bacilli</taxon>
        <taxon>Lactobacillales</taxon>
        <taxon>Streptococcaceae</taxon>
        <taxon>Streptococcus</taxon>
    </lineage>
</organism>
<accession>A4VZF0</accession>
<proteinExistence type="inferred from homology"/>
<feature type="chain" id="PRO_1000007376" description="Large ribosomal subunit protein bL28">
    <location>
        <begin position="1"/>
        <end position="62"/>
    </location>
</feature>
<evidence type="ECO:0000255" key="1">
    <source>
        <dbReference type="HAMAP-Rule" id="MF_00373"/>
    </source>
</evidence>
<evidence type="ECO:0000305" key="2"/>